<name>ACSF2_NOSS1</name>
<proteinExistence type="inferred from homology"/>
<gene>
    <name evidence="1" type="primary">acsF2</name>
    <name type="ordered locus">all1880</name>
</gene>
<dbReference type="EC" id="1.14.13.81" evidence="1"/>
<dbReference type="EMBL" id="BA000019">
    <property type="protein sequence ID" value="BAB73579.1"/>
    <property type="molecule type" value="Genomic_DNA"/>
</dbReference>
<dbReference type="PIR" id="AB2041">
    <property type="entry name" value="AB2041"/>
</dbReference>
<dbReference type="STRING" id="103690.gene:10493899"/>
<dbReference type="KEGG" id="ana:all1880"/>
<dbReference type="eggNOG" id="COG1633">
    <property type="taxonomic scope" value="Bacteria"/>
</dbReference>
<dbReference type="OrthoDB" id="141643at2"/>
<dbReference type="UniPathway" id="UPA00670"/>
<dbReference type="Proteomes" id="UP000002483">
    <property type="component" value="Chromosome"/>
</dbReference>
<dbReference type="GO" id="GO:0005506">
    <property type="term" value="F:iron ion binding"/>
    <property type="evidence" value="ECO:0007669"/>
    <property type="project" value="UniProtKB-UniRule"/>
</dbReference>
<dbReference type="GO" id="GO:0048529">
    <property type="term" value="F:magnesium-protoporphyrin IX monomethyl ester (oxidative) cyclase activity"/>
    <property type="evidence" value="ECO:0007669"/>
    <property type="project" value="UniProtKB-UniRule"/>
</dbReference>
<dbReference type="GO" id="GO:0036068">
    <property type="term" value="P:light-independent chlorophyll biosynthetic process"/>
    <property type="evidence" value="ECO:0007669"/>
    <property type="project" value="UniProtKB-UniRule"/>
</dbReference>
<dbReference type="GO" id="GO:0015979">
    <property type="term" value="P:photosynthesis"/>
    <property type="evidence" value="ECO:0007669"/>
    <property type="project" value="UniProtKB-UniRule"/>
</dbReference>
<dbReference type="CDD" id="cd01047">
    <property type="entry name" value="ACSF"/>
    <property type="match status" value="1"/>
</dbReference>
<dbReference type="HAMAP" id="MF_01840">
    <property type="entry name" value="AcsF"/>
    <property type="match status" value="1"/>
</dbReference>
<dbReference type="InterPro" id="IPR008434">
    <property type="entry name" value="AcsF"/>
</dbReference>
<dbReference type="InterPro" id="IPR009078">
    <property type="entry name" value="Ferritin-like_SF"/>
</dbReference>
<dbReference type="InterPro" id="IPR003251">
    <property type="entry name" value="Rr_diiron-bd_dom"/>
</dbReference>
<dbReference type="NCBIfam" id="TIGR02029">
    <property type="entry name" value="AcsF"/>
    <property type="match status" value="1"/>
</dbReference>
<dbReference type="NCBIfam" id="NF010172">
    <property type="entry name" value="PRK13654.1"/>
    <property type="match status" value="1"/>
</dbReference>
<dbReference type="PANTHER" id="PTHR31053">
    <property type="entry name" value="MAGNESIUM-PROTOPORPHYRIN IX MONOMETHYL ESTER [OXIDATIVE] CYCLASE, CHLOROPLASTIC"/>
    <property type="match status" value="1"/>
</dbReference>
<dbReference type="PANTHER" id="PTHR31053:SF2">
    <property type="entry name" value="MAGNESIUM-PROTOPORPHYRIN IX MONOMETHYL ESTER [OXIDATIVE] CYCLASE, CHLOROPLASTIC"/>
    <property type="match status" value="1"/>
</dbReference>
<dbReference type="Pfam" id="PF02915">
    <property type="entry name" value="Rubrerythrin"/>
    <property type="match status" value="1"/>
</dbReference>
<dbReference type="SUPFAM" id="SSF47240">
    <property type="entry name" value="Ferritin-like"/>
    <property type="match status" value="1"/>
</dbReference>
<protein>
    <recommendedName>
        <fullName evidence="1">Magnesium-protoporphyrin IX monomethyl ester [oxidative] cyclase 2</fullName>
        <shortName evidence="1">Mg-protoporphyrin IX monomethyl ester oxidative cyclase 2</shortName>
        <ecNumber evidence="1">1.14.13.81</ecNumber>
    </recommendedName>
</protein>
<evidence type="ECO:0000255" key="1">
    <source>
        <dbReference type="HAMAP-Rule" id="MF_01840"/>
    </source>
</evidence>
<keyword id="KW-0149">Chlorophyll biosynthesis</keyword>
<keyword id="KW-0408">Iron</keyword>
<keyword id="KW-0479">Metal-binding</keyword>
<keyword id="KW-0521">NADP</keyword>
<keyword id="KW-0560">Oxidoreductase</keyword>
<keyword id="KW-0602">Photosynthesis</keyword>
<keyword id="KW-1185">Reference proteome</keyword>
<accession>Q8YVU4</accession>
<sequence length="358" mass="42812">MVNSLTTPEPQTLKPGVKAPVQETLLTPRFYTTDFDAVANLDISANETEIRAIVEELRADYNRHHFVRDEEFKQSWDHITGEKRRAFIDFLERSCTSEFSGFLLFKELSRRIKSRNPLLAEAFEFMARDEARHAGFLNKSMSDLNLSLDLNYLTKNRTYTFFPPEWVIYTVYLSEKIGYWRYILVHQHMQEHPEYQFYPLFRKFESWCQDENRHGDFFKALLRSQPQLWKNWKARLWVRFFLLTVFVTHTMTVFERASFYESIGIHPRKYNNRVIQETNNTSARAFPLILNTNHPLFFWRLEQCWENNFKLAAIKNSKLPNFVKFFQRIPPATAIFWNMLRLFLIKPIDTEATRGTVL</sequence>
<feature type="chain" id="PRO_0000217527" description="Magnesium-protoporphyrin IX monomethyl ester [oxidative] cyclase 2">
    <location>
        <begin position="1"/>
        <end position="358"/>
    </location>
</feature>
<organism>
    <name type="scientific">Nostoc sp. (strain PCC 7120 / SAG 25.82 / UTEX 2576)</name>
    <dbReference type="NCBI Taxonomy" id="103690"/>
    <lineage>
        <taxon>Bacteria</taxon>
        <taxon>Bacillati</taxon>
        <taxon>Cyanobacteriota</taxon>
        <taxon>Cyanophyceae</taxon>
        <taxon>Nostocales</taxon>
        <taxon>Nostocaceae</taxon>
        <taxon>Nostoc</taxon>
    </lineage>
</organism>
<reference key="1">
    <citation type="journal article" date="2001" name="DNA Res.">
        <title>Complete genomic sequence of the filamentous nitrogen-fixing cyanobacterium Anabaena sp. strain PCC 7120.</title>
        <authorList>
            <person name="Kaneko T."/>
            <person name="Nakamura Y."/>
            <person name="Wolk C.P."/>
            <person name="Kuritz T."/>
            <person name="Sasamoto S."/>
            <person name="Watanabe A."/>
            <person name="Iriguchi M."/>
            <person name="Ishikawa A."/>
            <person name="Kawashima K."/>
            <person name="Kimura T."/>
            <person name="Kishida Y."/>
            <person name="Kohara M."/>
            <person name="Matsumoto M."/>
            <person name="Matsuno A."/>
            <person name="Muraki A."/>
            <person name="Nakazaki N."/>
            <person name="Shimpo S."/>
            <person name="Sugimoto M."/>
            <person name="Takazawa M."/>
            <person name="Yamada M."/>
            <person name="Yasuda M."/>
            <person name="Tabata S."/>
        </authorList>
    </citation>
    <scope>NUCLEOTIDE SEQUENCE [LARGE SCALE GENOMIC DNA]</scope>
    <source>
        <strain>PCC 7120 / SAG 25.82 / UTEX 2576</strain>
    </source>
</reference>
<comment type="function">
    <text evidence="1">Catalyzes the formation of the isocyclic ring in chlorophyll biosynthesis. Mediates the cyclase reaction, which results in the formation of divinylprotochlorophyllide (Pchlide) characteristic of all chlorophylls from magnesium-protoporphyrin IX 13-monomethyl ester (MgPMME).</text>
</comment>
<comment type="catalytic activity">
    <reaction evidence="1">
        <text>Mg-protoporphyrin IX 13-monomethyl ester + 3 NADPH + 3 O2 + 2 H(+) = 3,8-divinyl protochlorophyllide a + 3 NADP(+) + 5 H2O</text>
        <dbReference type="Rhea" id="RHEA:33235"/>
        <dbReference type="ChEBI" id="CHEBI:15377"/>
        <dbReference type="ChEBI" id="CHEBI:15378"/>
        <dbReference type="ChEBI" id="CHEBI:15379"/>
        <dbReference type="ChEBI" id="CHEBI:57783"/>
        <dbReference type="ChEBI" id="CHEBI:58349"/>
        <dbReference type="ChEBI" id="CHEBI:58632"/>
        <dbReference type="ChEBI" id="CHEBI:60491"/>
        <dbReference type="EC" id="1.14.13.81"/>
    </reaction>
</comment>
<comment type="cofactor">
    <cofactor evidence="1">
        <name>Fe cation</name>
        <dbReference type="ChEBI" id="CHEBI:24875"/>
    </cofactor>
</comment>
<comment type="pathway">
    <text evidence="1">Porphyrin-containing compound metabolism; chlorophyll biosynthesis (light-independent).</text>
</comment>
<comment type="similarity">
    <text evidence="1">Belongs to the AcsF family.</text>
</comment>